<reference key="1">
    <citation type="journal article" date="2005" name="Nucleic Acids Res.">
        <title>The genome sequence of Xanthomonas oryzae pathovar oryzae KACC10331, the bacterial blight pathogen of rice.</title>
        <authorList>
            <person name="Lee B.-M."/>
            <person name="Park Y.-J."/>
            <person name="Park D.-S."/>
            <person name="Kang H.-W."/>
            <person name="Kim J.-G."/>
            <person name="Song E.-S."/>
            <person name="Park I.-C."/>
            <person name="Yoon U.-H."/>
            <person name="Hahn J.-H."/>
            <person name="Koo B.-S."/>
            <person name="Lee G.-B."/>
            <person name="Kim H."/>
            <person name="Park H.-S."/>
            <person name="Yoon K.-O."/>
            <person name="Kim J.-H."/>
            <person name="Jung C.-H."/>
            <person name="Koh N.-H."/>
            <person name="Seo J.-S."/>
            <person name="Go S.-J."/>
        </authorList>
    </citation>
    <scope>NUCLEOTIDE SEQUENCE [LARGE SCALE GENOMIC DNA]</scope>
    <source>
        <strain>KACC10331 / KXO85</strain>
    </source>
</reference>
<dbReference type="EC" id="6.1.1.4" evidence="1"/>
<dbReference type="EMBL" id="AE013598">
    <property type="protein sequence ID" value="AAW76583.1"/>
    <property type="molecule type" value="Genomic_DNA"/>
</dbReference>
<dbReference type="SMR" id="Q5GXI8"/>
<dbReference type="STRING" id="291331.XOO3329"/>
<dbReference type="KEGG" id="xoo:XOO3329"/>
<dbReference type="HOGENOM" id="CLU_004427_0_0_6"/>
<dbReference type="Proteomes" id="UP000006735">
    <property type="component" value="Chromosome"/>
</dbReference>
<dbReference type="GO" id="GO:0005829">
    <property type="term" value="C:cytosol"/>
    <property type="evidence" value="ECO:0007669"/>
    <property type="project" value="TreeGrafter"/>
</dbReference>
<dbReference type="GO" id="GO:0002161">
    <property type="term" value="F:aminoacyl-tRNA deacylase activity"/>
    <property type="evidence" value="ECO:0007669"/>
    <property type="project" value="InterPro"/>
</dbReference>
<dbReference type="GO" id="GO:0005524">
    <property type="term" value="F:ATP binding"/>
    <property type="evidence" value="ECO:0007669"/>
    <property type="project" value="UniProtKB-UniRule"/>
</dbReference>
<dbReference type="GO" id="GO:0004823">
    <property type="term" value="F:leucine-tRNA ligase activity"/>
    <property type="evidence" value="ECO:0007669"/>
    <property type="project" value="UniProtKB-UniRule"/>
</dbReference>
<dbReference type="GO" id="GO:0006429">
    <property type="term" value="P:leucyl-tRNA aminoacylation"/>
    <property type="evidence" value="ECO:0007669"/>
    <property type="project" value="UniProtKB-UniRule"/>
</dbReference>
<dbReference type="CDD" id="cd07958">
    <property type="entry name" value="Anticodon_Ia_Leu_BEm"/>
    <property type="match status" value="1"/>
</dbReference>
<dbReference type="CDD" id="cd00812">
    <property type="entry name" value="LeuRS_core"/>
    <property type="match status" value="1"/>
</dbReference>
<dbReference type="FunFam" id="1.10.730.10:FF:000003">
    <property type="entry name" value="Leucine--tRNA ligase"/>
    <property type="match status" value="1"/>
</dbReference>
<dbReference type="FunFam" id="2.20.28.290:FF:000001">
    <property type="entry name" value="Leucine--tRNA ligase"/>
    <property type="match status" value="1"/>
</dbReference>
<dbReference type="FunFam" id="3.10.20.590:FF:000001">
    <property type="entry name" value="Leucine--tRNA ligase"/>
    <property type="match status" value="1"/>
</dbReference>
<dbReference type="FunFam" id="3.40.50.620:FF:000003">
    <property type="entry name" value="Leucine--tRNA ligase"/>
    <property type="match status" value="1"/>
</dbReference>
<dbReference type="FunFam" id="3.40.50.620:FF:000056">
    <property type="entry name" value="Leucine--tRNA ligase"/>
    <property type="match status" value="1"/>
</dbReference>
<dbReference type="FunFam" id="3.90.740.10:FF:000012">
    <property type="entry name" value="Leucine--tRNA ligase"/>
    <property type="match status" value="1"/>
</dbReference>
<dbReference type="Gene3D" id="2.20.28.290">
    <property type="match status" value="1"/>
</dbReference>
<dbReference type="Gene3D" id="3.10.20.590">
    <property type="match status" value="1"/>
</dbReference>
<dbReference type="Gene3D" id="3.40.50.620">
    <property type="entry name" value="HUPs"/>
    <property type="match status" value="2"/>
</dbReference>
<dbReference type="Gene3D" id="1.10.730.10">
    <property type="entry name" value="Isoleucyl-tRNA Synthetase, Domain 1"/>
    <property type="match status" value="1"/>
</dbReference>
<dbReference type="Gene3D" id="3.90.740.10">
    <property type="entry name" value="Valyl/Leucyl/Isoleucyl-tRNA synthetase, editing domain"/>
    <property type="match status" value="1"/>
</dbReference>
<dbReference type="HAMAP" id="MF_00049_B">
    <property type="entry name" value="Leu_tRNA_synth_B"/>
    <property type="match status" value="1"/>
</dbReference>
<dbReference type="InterPro" id="IPR001412">
    <property type="entry name" value="aa-tRNA-synth_I_CS"/>
</dbReference>
<dbReference type="InterPro" id="IPR002300">
    <property type="entry name" value="aa-tRNA-synth_Ia"/>
</dbReference>
<dbReference type="InterPro" id="IPR002302">
    <property type="entry name" value="Leu-tRNA-ligase"/>
</dbReference>
<dbReference type="InterPro" id="IPR025709">
    <property type="entry name" value="Leu_tRNA-synth_edit"/>
</dbReference>
<dbReference type="InterPro" id="IPR013155">
    <property type="entry name" value="M/V/L/I-tRNA-synth_anticd-bd"/>
</dbReference>
<dbReference type="InterPro" id="IPR015413">
    <property type="entry name" value="Methionyl/Leucyl_tRNA_Synth"/>
</dbReference>
<dbReference type="InterPro" id="IPR014729">
    <property type="entry name" value="Rossmann-like_a/b/a_fold"/>
</dbReference>
<dbReference type="InterPro" id="IPR009080">
    <property type="entry name" value="tRNAsynth_Ia_anticodon-bd"/>
</dbReference>
<dbReference type="InterPro" id="IPR009008">
    <property type="entry name" value="Val/Leu/Ile-tRNA-synth_edit"/>
</dbReference>
<dbReference type="NCBIfam" id="TIGR00396">
    <property type="entry name" value="leuS_bact"/>
    <property type="match status" value="1"/>
</dbReference>
<dbReference type="PANTHER" id="PTHR43740:SF2">
    <property type="entry name" value="LEUCINE--TRNA LIGASE, MITOCHONDRIAL"/>
    <property type="match status" value="1"/>
</dbReference>
<dbReference type="PANTHER" id="PTHR43740">
    <property type="entry name" value="LEUCYL-TRNA SYNTHETASE"/>
    <property type="match status" value="1"/>
</dbReference>
<dbReference type="Pfam" id="PF08264">
    <property type="entry name" value="Anticodon_1"/>
    <property type="match status" value="1"/>
</dbReference>
<dbReference type="Pfam" id="PF00133">
    <property type="entry name" value="tRNA-synt_1"/>
    <property type="match status" value="2"/>
</dbReference>
<dbReference type="Pfam" id="PF13603">
    <property type="entry name" value="tRNA-synt_1_2"/>
    <property type="match status" value="1"/>
</dbReference>
<dbReference type="Pfam" id="PF09334">
    <property type="entry name" value="tRNA-synt_1g"/>
    <property type="match status" value="1"/>
</dbReference>
<dbReference type="PRINTS" id="PR00985">
    <property type="entry name" value="TRNASYNTHLEU"/>
</dbReference>
<dbReference type="SUPFAM" id="SSF47323">
    <property type="entry name" value="Anticodon-binding domain of a subclass of class I aminoacyl-tRNA synthetases"/>
    <property type="match status" value="1"/>
</dbReference>
<dbReference type="SUPFAM" id="SSF52374">
    <property type="entry name" value="Nucleotidylyl transferase"/>
    <property type="match status" value="1"/>
</dbReference>
<dbReference type="SUPFAM" id="SSF50677">
    <property type="entry name" value="ValRS/IleRS/LeuRS editing domain"/>
    <property type="match status" value="1"/>
</dbReference>
<dbReference type="PROSITE" id="PS00178">
    <property type="entry name" value="AA_TRNA_LIGASE_I"/>
    <property type="match status" value="1"/>
</dbReference>
<keyword id="KW-0030">Aminoacyl-tRNA synthetase</keyword>
<keyword id="KW-0067">ATP-binding</keyword>
<keyword id="KW-0963">Cytoplasm</keyword>
<keyword id="KW-0436">Ligase</keyword>
<keyword id="KW-0547">Nucleotide-binding</keyword>
<keyword id="KW-0648">Protein biosynthesis</keyword>
<keyword id="KW-1185">Reference proteome</keyword>
<name>SYL_XANOR</name>
<feature type="chain" id="PRO_1000009466" description="Leucine--tRNA ligase">
    <location>
        <begin position="1"/>
        <end position="880"/>
    </location>
</feature>
<feature type="short sequence motif" description="'HIGH' region">
    <location>
        <begin position="46"/>
        <end position="56"/>
    </location>
</feature>
<feature type="short sequence motif" description="'KMSKS' region">
    <location>
        <begin position="638"/>
        <end position="642"/>
    </location>
</feature>
<feature type="binding site" evidence="1">
    <location>
        <position position="641"/>
    </location>
    <ligand>
        <name>ATP</name>
        <dbReference type="ChEBI" id="CHEBI:30616"/>
    </ligand>
</feature>
<accession>Q5GXI8</accession>
<protein>
    <recommendedName>
        <fullName evidence="1">Leucine--tRNA ligase</fullName>
        <ecNumber evidence="1">6.1.1.4</ecNumber>
    </recommendedName>
    <alternativeName>
        <fullName evidence="1">Leucyl-tRNA synthetase</fullName>
        <shortName evidence="1">LeuRS</shortName>
    </alternativeName>
</protein>
<evidence type="ECO:0000255" key="1">
    <source>
        <dbReference type="HAMAP-Rule" id="MF_00049"/>
    </source>
</evidence>
<comment type="catalytic activity">
    <reaction evidence="1">
        <text>tRNA(Leu) + L-leucine + ATP = L-leucyl-tRNA(Leu) + AMP + diphosphate</text>
        <dbReference type="Rhea" id="RHEA:11688"/>
        <dbReference type="Rhea" id="RHEA-COMP:9613"/>
        <dbReference type="Rhea" id="RHEA-COMP:9622"/>
        <dbReference type="ChEBI" id="CHEBI:30616"/>
        <dbReference type="ChEBI" id="CHEBI:33019"/>
        <dbReference type="ChEBI" id="CHEBI:57427"/>
        <dbReference type="ChEBI" id="CHEBI:78442"/>
        <dbReference type="ChEBI" id="CHEBI:78494"/>
        <dbReference type="ChEBI" id="CHEBI:456215"/>
        <dbReference type="EC" id="6.1.1.4"/>
    </reaction>
</comment>
<comment type="subcellular location">
    <subcellularLocation>
        <location evidence="1">Cytoplasm</location>
    </subcellularLocation>
</comment>
<comment type="similarity">
    <text evidence="1">Belongs to the class-I aminoacyl-tRNA synthetase family.</text>
</comment>
<organism>
    <name type="scientific">Xanthomonas oryzae pv. oryzae (strain KACC10331 / KXO85)</name>
    <dbReference type="NCBI Taxonomy" id="291331"/>
    <lineage>
        <taxon>Bacteria</taxon>
        <taxon>Pseudomonadati</taxon>
        <taxon>Pseudomonadota</taxon>
        <taxon>Gammaproteobacteria</taxon>
        <taxon>Lysobacterales</taxon>
        <taxon>Lysobacteraceae</taxon>
        <taxon>Xanthomonas</taxon>
    </lineage>
</organism>
<proteinExistence type="inferred from homology"/>
<sequence>MSTVEPNVYDPHQVETSAQQFWDATRAFQVDENSEKPKFYCLSMLPYPSGALHMGHVRNYTISDVVSRYKRMTGHNVLQPMGWDAFGLPAENAAIKNKTAPAKWTYANIAHMRAQLKSLGYAIDWSREFATCTPDYYVHEQRMFTRLMRKGLAYRRNAVVNWDPIDQTVLANEQVIDGRGWRSGAVVEKREIPQWFLRITDYAQELLDGLDQLDGWPDSVKTMQRNWIGRSEGLEIQFDVRDTNGAALDPLRVFTTRPDTLMGVTFVSIAAEHPLALHAAKSNPELAALLETLKHGGVSEAELETQEKRGMATGLTAVHPISGEQVPVWVANFVLMGYGTGAVMAVPGHDQRDFEFANKYGLPIVQVVKLREPRNDDEQRWDATEWRDWYTDKSRELELINSAEFDGLDFGGAFEALAERFERKGQGQRRVNYRLRDWGVSRQRYWGCPIPVIYCPKCGAVPVPEDQLPVVLPENVEFACTGSPIKTDPTWRQTTCPDCGGPAERETDTFDTFMESSWYVARYTSPNAREMVDRRANYWMPADLYVGGIEHAILHLMYFRFYHKLMRDARLVDSDEPVTNLLTQGMVIADTFYRDADNGGKDWINPADVEIQRDERGRVTGAVLIADGQPVHIGGTEKMSKSKNNGVDPQSMVAKYGADTVRLFSMFAAPPEQSLEWNEAGVDGMARFMRRLWAQVHKHVGEGAAVALDVAALSAEQKAIRRKTHETIGKVSDDYGRRHSFNTAIAAVMELSNALAKFDDASDQGRAVRQEALEAMVLLLNPITPHASHALWQVLGRGETLLENVAFPQADVSALVRDALTLAVQINGKLRGTIDVAADAAREQIEALAQAEPNAAKFLDGLSVRKIIIVPGKIVNIVAG</sequence>
<gene>
    <name evidence="1" type="primary">leuS</name>
    <name type="ordered locus">XOO3329</name>
</gene>